<dbReference type="EMBL" id="AL123456">
    <property type="protein sequence ID" value="CCP44474.1"/>
    <property type="molecule type" value="Genomic_DNA"/>
</dbReference>
<dbReference type="PIR" id="C70504">
    <property type="entry name" value="C70504"/>
</dbReference>
<dbReference type="RefSeq" id="NP_216224.1">
    <property type="nucleotide sequence ID" value="NC_000962.3"/>
</dbReference>
<dbReference type="RefSeq" id="WP_003898982.1">
    <property type="nucleotide sequence ID" value="NC_000962.3"/>
</dbReference>
<dbReference type="SMR" id="P9WLT1"/>
<dbReference type="STRING" id="83332.Rv1708"/>
<dbReference type="PaxDb" id="83332-Rv1708"/>
<dbReference type="DNASU" id="885082"/>
<dbReference type="GeneID" id="885082"/>
<dbReference type="KEGG" id="mtu:Rv1708"/>
<dbReference type="KEGG" id="mtv:RVBD_1708"/>
<dbReference type="PATRIC" id="fig|83332.111.peg.1898"/>
<dbReference type="TubercuList" id="Rv1708"/>
<dbReference type="eggNOG" id="COG1192">
    <property type="taxonomic scope" value="Bacteria"/>
</dbReference>
<dbReference type="InParanoid" id="P9WLT1"/>
<dbReference type="OrthoDB" id="9815116at2"/>
<dbReference type="PhylomeDB" id="P9WLT1"/>
<dbReference type="Proteomes" id="UP000001584">
    <property type="component" value="Chromosome"/>
</dbReference>
<dbReference type="GO" id="GO:0043590">
    <property type="term" value="C:bacterial nucleoid"/>
    <property type="evidence" value="ECO:0000314"/>
    <property type="project" value="MTBBASE"/>
</dbReference>
<dbReference type="GO" id="GO:0005886">
    <property type="term" value="C:plasma membrane"/>
    <property type="evidence" value="ECO:0007005"/>
    <property type="project" value="MTBBASE"/>
</dbReference>
<dbReference type="GO" id="GO:0005524">
    <property type="term" value="F:ATP binding"/>
    <property type="evidence" value="ECO:0007669"/>
    <property type="project" value="UniProtKB-KW"/>
</dbReference>
<dbReference type="CDD" id="cd02042">
    <property type="entry name" value="ParAB_family"/>
    <property type="match status" value="1"/>
</dbReference>
<dbReference type="FunFam" id="3.40.50.300:FF:000285">
    <property type="entry name" value="Sporulation initiation inhibitor Soj"/>
    <property type="match status" value="1"/>
</dbReference>
<dbReference type="Gene3D" id="3.40.50.300">
    <property type="entry name" value="P-loop containing nucleotide triphosphate hydrolases"/>
    <property type="match status" value="1"/>
</dbReference>
<dbReference type="InterPro" id="IPR025669">
    <property type="entry name" value="AAA_dom"/>
</dbReference>
<dbReference type="InterPro" id="IPR050678">
    <property type="entry name" value="DNA_Partitioning_ATPase"/>
</dbReference>
<dbReference type="InterPro" id="IPR027417">
    <property type="entry name" value="P-loop_NTPase"/>
</dbReference>
<dbReference type="PANTHER" id="PTHR13696:SF99">
    <property type="entry name" value="COBYRINIC ACID AC-DIAMIDE SYNTHASE"/>
    <property type="match status" value="1"/>
</dbReference>
<dbReference type="PANTHER" id="PTHR13696">
    <property type="entry name" value="P-LOOP CONTAINING NUCLEOSIDE TRIPHOSPHATE HYDROLASE"/>
    <property type="match status" value="1"/>
</dbReference>
<dbReference type="Pfam" id="PF13614">
    <property type="entry name" value="AAA_31"/>
    <property type="match status" value="1"/>
</dbReference>
<dbReference type="SUPFAM" id="SSF52540">
    <property type="entry name" value="P-loop containing nucleoside triphosphate hydrolases"/>
    <property type="match status" value="1"/>
</dbReference>
<feature type="chain" id="PRO_0000390677" description="Uncharacterized protein Rv1708">
    <location>
        <begin position="1"/>
        <end position="318"/>
    </location>
</feature>
<feature type="region of interest" description="Disordered" evidence="2">
    <location>
        <begin position="19"/>
        <end position="63"/>
    </location>
</feature>
<feature type="compositionally biased region" description="Basic and acidic residues" evidence="2">
    <location>
        <begin position="21"/>
        <end position="37"/>
    </location>
</feature>
<feature type="binding site" evidence="1">
    <location>
        <begin position="72"/>
        <end position="79"/>
    </location>
    <ligand>
        <name>ATP</name>
        <dbReference type="ChEBI" id="CHEBI:30616"/>
    </ligand>
</feature>
<reference key="1">
    <citation type="journal article" date="1998" name="Nature">
        <title>Deciphering the biology of Mycobacterium tuberculosis from the complete genome sequence.</title>
        <authorList>
            <person name="Cole S.T."/>
            <person name="Brosch R."/>
            <person name="Parkhill J."/>
            <person name="Garnier T."/>
            <person name="Churcher C.M."/>
            <person name="Harris D.E."/>
            <person name="Gordon S.V."/>
            <person name="Eiglmeier K."/>
            <person name="Gas S."/>
            <person name="Barry C.E. III"/>
            <person name="Tekaia F."/>
            <person name="Badcock K."/>
            <person name="Basham D."/>
            <person name="Brown D."/>
            <person name="Chillingworth T."/>
            <person name="Connor R."/>
            <person name="Davies R.M."/>
            <person name="Devlin K."/>
            <person name="Feltwell T."/>
            <person name="Gentles S."/>
            <person name="Hamlin N."/>
            <person name="Holroyd S."/>
            <person name="Hornsby T."/>
            <person name="Jagels K."/>
            <person name="Krogh A."/>
            <person name="McLean J."/>
            <person name="Moule S."/>
            <person name="Murphy L.D."/>
            <person name="Oliver S."/>
            <person name="Osborne J."/>
            <person name="Quail M.A."/>
            <person name="Rajandream M.A."/>
            <person name="Rogers J."/>
            <person name="Rutter S."/>
            <person name="Seeger K."/>
            <person name="Skelton S."/>
            <person name="Squares S."/>
            <person name="Squares R."/>
            <person name="Sulston J.E."/>
            <person name="Taylor K."/>
            <person name="Whitehead S."/>
            <person name="Barrell B.G."/>
        </authorList>
    </citation>
    <scope>NUCLEOTIDE SEQUENCE [LARGE SCALE GENOMIC DNA]</scope>
    <source>
        <strain>ATCC 25618 / H37Rv</strain>
    </source>
</reference>
<reference key="2">
    <citation type="journal article" date="2003" name="Mol. Microbiol.">
        <title>Genes required for mycobacterial growth defined by high density mutagenesis.</title>
        <authorList>
            <person name="Sassetti C.M."/>
            <person name="Boyd D.H."/>
            <person name="Rubin E.J."/>
        </authorList>
    </citation>
    <scope>DISRUPTION PHENOTYPE</scope>
    <source>
        <strain>ATCC 25618 / H37Rv</strain>
    </source>
</reference>
<reference key="3">
    <citation type="journal article" date="2006" name="Microbiology">
        <title>Identification of cell cycle regulators in Mycobacterium tuberculosis by inhibition of septum formation and global transcriptional analysis.</title>
        <authorList>
            <person name="Slayden R.A."/>
            <person name="Knudson D.L."/>
            <person name="Belisle J.T."/>
        </authorList>
    </citation>
    <scope>INDUCTION</scope>
    <scope>FUNCTION</scope>
    <source>
        <strain>ATCC 25618 / H37Rv</strain>
    </source>
</reference>
<reference key="4">
    <citation type="journal article" date="2011" name="Mol. Cell. Proteomics">
        <title>Proteogenomic analysis of Mycobacterium tuberculosis by high resolution mass spectrometry.</title>
        <authorList>
            <person name="Kelkar D.S."/>
            <person name="Kumar D."/>
            <person name="Kumar P."/>
            <person name="Balakrishnan L."/>
            <person name="Muthusamy B."/>
            <person name="Yadav A.K."/>
            <person name="Shrivastava P."/>
            <person name="Marimuthu A."/>
            <person name="Anand S."/>
            <person name="Sundaram H."/>
            <person name="Kingsbury R."/>
            <person name="Harsha H.C."/>
            <person name="Nair B."/>
            <person name="Prasad T.S."/>
            <person name="Chauhan D.S."/>
            <person name="Katoch K."/>
            <person name="Katoch V.M."/>
            <person name="Kumar P."/>
            <person name="Chaerkady R."/>
            <person name="Ramachandran S."/>
            <person name="Dash D."/>
            <person name="Pandey A."/>
        </authorList>
    </citation>
    <scope>IDENTIFICATION BY MASS SPECTROMETRY [LARGE SCALE ANALYSIS]</scope>
    <source>
        <strain>ATCC 25618 / H37Rv</strain>
    </source>
</reference>
<protein>
    <recommendedName>
        <fullName>Uncharacterized protein Rv1708</fullName>
    </recommendedName>
</protein>
<proteinExistence type="evidence at protein level"/>
<comment type="function">
    <text evidence="4">May play a role in septum formation.</text>
</comment>
<comment type="induction">
    <text evidence="4">Induced by albendazole and thiabendazole, which inhibit the GTPase activity of FtsZ and probably septum formation.</text>
</comment>
<comment type="disruption phenotype">
    <text evidence="3">Essential for growth.</text>
</comment>
<comment type="similarity">
    <text evidence="5">Belongs to the ParA family.</text>
</comment>
<organism>
    <name type="scientific">Mycobacterium tuberculosis (strain ATCC 25618 / H37Rv)</name>
    <dbReference type="NCBI Taxonomy" id="83332"/>
    <lineage>
        <taxon>Bacteria</taxon>
        <taxon>Bacillati</taxon>
        <taxon>Actinomycetota</taxon>
        <taxon>Actinomycetes</taxon>
        <taxon>Mycobacteriales</taxon>
        <taxon>Mycobacteriaceae</taxon>
        <taxon>Mycobacterium</taxon>
        <taxon>Mycobacterium tuberculosis complex</taxon>
    </lineage>
</organism>
<keyword id="KW-0067">ATP-binding</keyword>
<keyword id="KW-0547">Nucleotide-binding</keyword>
<keyword id="KW-1185">Reference proteome</keyword>
<accession>P9WLT1</accession>
<accession>L0TA63</accession>
<accession>O33207</accession>
<accession>Q7D840</accession>
<evidence type="ECO:0000255" key="1"/>
<evidence type="ECO:0000256" key="2">
    <source>
        <dbReference type="SAM" id="MobiDB-lite"/>
    </source>
</evidence>
<evidence type="ECO:0000269" key="3">
    <source>
    </source>
</evidence>
<evidence type="ECO:0000269" key="4">
    <source>
    </source>
</evidence>
<evidence type="ECO:0000305" key="5"/>
<name>Y1708_MYCTU</name>
<gene>
    <name type="ordered locus">Rv1708</name>
</gene>
<sequence>MPAGLPGQASVAVRLSCDVPPDARHHEPRPGMTDHPDTGNGIGLTGRPPRAIPDPAPRSSHGPAKVIAMCNQKGGVGKTTSTINLGAALGEYGRRVLLVDMDPQGALSAGLGVPHYELDKTIHNVLVEPRVSIDDVLIHSRVKNMDLVPSNIDLSAAEIQLVNEVGREQTLARALYPVLDRYDYVLIDCQPSLGLLTVNGLACTDGVIIPTECEFFSLRGLALLTDTVDKVRDRLNPKLDISGILITRYDPRTVNSREVMARVVERFGDLVFDTVITRTVRFPETSVAGEPITTWAPKSAGALAYRALARELIDRFGM</sequence>